<organism>
    <name type="scientific">Kineococcus radiotolerans (strain ATCC BAA-149 / DSM 14245 / SRS30216)</name>
    <dbReference type="NCBI Taxonomy" id="266940"/>
    <lineage>
        <taxon>Bacteria</taxon>
        <taxon>Bacillati</taxon>
        <taxon>Actinomycetota</taxon>
        <taxon>Actinomycetes</taxon>
        <taxon>Kineosporiales</taxon>
        <taxon>Kineosporiaceae</taxon>
        <taxon>Kineococcus</taxon>
    </lineage>
</organism>
<feature type="chain" id="PRO_0000356908" description="Ferric nitrobindin-like protein">
    <location>
        <begin position="1"/>
        <end position="180"/>
    </location>
</feature>
<feature type="short sequence motif" description="GXWXGXG" evidence="1">
    <location>
        <begin position="21"/>
        <end position="27"/>
    </location>
</feature>
<protein>
    <recommendedName>
        <fullName evidence="2">Ferric nitrobindin-like protein</fullName>
    </recommendedName>
</protein>
<dbReference type="EMBL" id="CP000750">
    <property type="protein sequence ID" value="ABS02370.1"/>
    <property type="molecule type" value="Genomic_DNA"/>
</dbReference>
<dbReference type="RefSeq" id="WP_012084780.1">
    <property type="nucleotide sequence ID" value="NC_009664.2"/>
</dbReference>
<dbReference type="SMR" id="A6W6D1"/>
<dbReference type="STRING" id="266940.Krad_0882"/>
<dbReference type="KEGG" id="kra:Krad_0882"/>
<dbReference type="eggNOG" id="COG3485">
    <property type="taxonomic scope" value="Bacteria"/>
</dbReference>
<dbReference type="HOGENOM" id="CLU_085483_0_1_11"/>
<dbReference type="OrthoDB" id="4804006at2"/>
<dbReference type="Proteomes" id="UP000001116">
    <property type="component" value="Chromosome"/>
</dbReference>
<dbReference type="CDD" id="cd07828">
    <property type="entry name" value="lipocalin_heme-bd-THAP4-like"/>
    <property type="match status" value="1"/>
</dbReference>
<dbReference type="Gene3D" id="2.40.128.20">
    <property type="match status" value="1"/>
</dbReference>
<dbReference type="HAMAP" id="MF_01297">
    <property type="entry name" value="nitrobindin"/>
    <property type="match status" value="1"/>
</dbReference>
<dbReference type="InterPro" id="IPR012674">
    <property type="entry name" value="Calycin"/>
</dbReference>
<dbReference type="InterPro" id="IPR022939">
    <property type="entry name" value="Nb(III)_bact/plant"/>
</dbReference>
<dbReference type="InterPro" id="IPR045165">
    <property type="entry name" value="Nitrobindin"/>
</dbReference>
<dbReference type="InterPro" id="IPR014878">
    <property type="entry name" value="THAP4-like_heme-bd"/>
</dbReference>
<dbReference type="PANTHER" id="PTHR15854:SF4">
    <property type="entry name" value="PEROXYNITRITE ISOMERASE THAP4"/>
    <property type="match status" value="1"/>
</dbReference>
<dbReference type="PANTHER" id="PTHR15854">
    <property type="entry name" value="THAP4 PROTEIN"/>
    <property type="match status" value="1"/>
</dbReference>
<dbReference type="Pfam" id="PF08768">
    <property type="entry name" value="THAP4_heme-bd"/>
    <property type="match status" value="1"/>
</dbReference>
<dbReference type="SUPFAM" id="SSF50814">
    <property type="entry name" value="Lipocalins"/>
    <property type="match status" value="1"/>
</dbReference>
<accession>A6W6D1</accession>
<gene>
    <name type="ordered locus">Krad_0882</name>
</gene>
<proteinExistence type="inferred from homology"/>
<sequence length="180" mass="19559">MALPLRTDTPLTLVPLSWLLGRWEGAGVLGHPARGDSDTRFGQVVEFGHDGRDFLTYTSTTWALDEDGSTTEPLDVETGYWRPQPVDLDTPAPAEGPRPVELEVLLAHPTGVVEVLVGTARGPRIDLSSDVVARTATAHEYTAGNRMYGMVEGDLLWALDVALEGHPLRSYASARLKRVS</sequence>
<reference key="1">
    <citation type="journal article" date="2008" name="PLoS ONE">
        <title>Survival in nuclear waste, extreme resistance, and potential applications gleaned from the genome sequence of Kineococcus radiotolerans SRS30216.</title>
        <authorList>
            <person name="Bagwell C.E."/>
            <person name="Bhat S."/>
            <person name="Hawkins G.M."/>
            <person name="Smith B.W."/>
            <person name="Biswas T."/>
            <person name="Hoover T.R."/>
            <person name="Saunders E."/>
            <person name="Han C.S."/>
            <person name="Tsodikov O.V."/>
            <person name="Shimkets L.J."/>
        </authorList>
    </citation>
    <scope>NUCLEOTIDE SEQUENCE [LARGE SCALE GENOMIC DNA]</scope>
    <source>
        <strain>ATCC BAA-149 / DSM 14245 / SRS30216</strain>
    </source>
</reference>
<name>NBLIK_KINRD</name>
<comment type="similarity">
    <text evidence="1">Belongs to the nitrobindin family.</text>
</comment>
<comment type="caution">
    <text evidence="2">Lacks the conserved His residue that binds heme iron in the nitrobindin family.</text>
</comment>
<evidence type="ECO:0000255" key="1">
    <source>
        <dbReference type="HAMAP-Rule" id="MF_01297"/>
    </source>
</evidence>
<evidence type="ECO:0000305" key="2"/>
<keyword id="KW-1185">Reference proteome</keyword>